<comment type="function">
    <text evidence="1">Catalyzes the conversion of (8S)-3',8-cyclo-7,8-dihydroguanosine 5'-triphosphate to cyclic pyranopterin monophosphate (cPMP).</text>
</comment>
<comment type="catalytic activity">
    <reaction evidence="1">
        <text>(8S)-3',8-cyclo-7,8-dihydroguanosine 5'-triphosphate = cyclic pyranopterin phosphate + diphosphate</text>
        <dbReference type="Rhea" id="RHEA:49580"/>
        <dbReference type="ChEBI" id="CHEBI:33019"/>
        <dbReference type="ChEBI" id="CHEBI:59648"/>
        <dbReference type="ChEBI" id="CHEBI:131766"/>
        <dbReference type="EC" id="4.6.1.17"/>
    </reaction>
</comment>
<comment type="pathway">
    <text evidence="1">Cofactor biosynthesis; molybdopterin biosynthesis.</text>
</comment>
<comment type="subunit">
    <text evidence="1">Homohexamer; trimer of dimers.</text>
</comment>
<comment type="similarity">
    <text evidence="1">Belongs to the MoaC family.</text>
</comment>
<organism>
    <name type="scientific">Methanosarcina acetivorans (strain ATCC 35395 / DSM 2834 / JCM 12185 / C2A)</name>
    <dbReference type="NCBI Taxonomy" id="188937"/>
    <lineage>
        <taxon>Archaea</taxon>
        <taxon>Methanobacteriati</taxon>
        <taxon>Methanobacteriota</taxon>
        <taxon>Stenosarchaea group</taxon>
        <taxon>Methanomicrobia</taxon>
        <taxon>Methanosarcinales</taxon>
        <taxon>Methanosarcinaceae</taxon>
        <taxon>Methanosarcina</taxon>
    </lineage>
</organism>
<name>MOAC_METAC</name>
<dbReference type="EC" id="4.6.1.17" evidence="1"/>
<dbReference type="EMBL" id="AE010299">
    <property type="protein sequence ID" value="AAM04589.1"/>
    <property type="molecule type" value="Genomic_DNA"/>
</dbReference>
<dbReference type="SMR" id="Q8TRK7"/>
<dbReference type="FunCoup" id="Q8TRK7">
    <property type="interactions" value="100"/>
</dbReference>
<dbReference type="STRING" id="188937.MA_1168"/>
<dbReference type="EnsemblBacteria" id="AAM04589">
    <property type="protein sequence ID" value="AAM04589"/>
    <property type="gene ID" value="MA_1168"/>
</dbReference>
<dbReference type="KEGG" id="mac:MA_1168"/>
<dbReference type="HOGENOM" id="CLU_074693_1_2_2"/>
<dbReference type="InParanoid" id="Q8TRK7"/>
<dbReference type="PhylomeDB" id="Q8TRK7"/>
<dbReference type="UniPathway" id="UPA00344"/>
<dbReference type="Proteomes" id="UP000002487">
    <property type="component" value="Chromosome"/>
</dbReference>
<dbReference type="GO" id="GO:0061799">
    <property type="term" value="F:cyclic pyranopterin monophosphate synthase activity"/>
    <property type="evidence" value="ECO:0007669"/>
    <property type="project" value="UniProtKB-UniRule"/>
</dbReference>
<dbReference type="GO" id="GO:0006777">
    <property type="term" value="P:Mo-molybdopterin cofactor biosynthetic process"/>
    <property type="evidence" value="ECO:0007669"/>
    <property type="project" value="UniProtKB-UniRule"/>
</dbReference>
<dbReference type="CDD" id="cd01419">
    <property type="entry name" value="MoaC_A"/>
    <property type="match status" value="1"/>
</dbReference>
<dbReference type="Gene3D" id="3.30.70.640">
    <property type="entry name" value="Molybdopterin cofactor biosynthesis C (MoaC) domain"/>
    <property type="match status" value="1"/>
</dbReference>
<dbReference type="HAMAP" id="MF_01224_A">
    <property type="entry name" value="MoaC_A"/>
    <property type="match status" value="1"/>
</dbReference>
<dbReference type="InterPro" id="IPR023047">
    <property type="entry name" value="Mo_CF_biosynth-C_arc"/>
</dbReference>
<dbReference type="InterPro" id="IPR023045">
    <property type="entry name" value="MoaC"/>
</dbReference>
<dbReference type="InterPro" id="IPR036522">
    <property type="entry name" value="MoaC_sf"/>
</dbReference>
<dbReference type="InterPro" id="IPR002820">
    <property type="entry name" value="Mopterin_CF_biosynth-C_dom"/>
</dbReference>
<dbReference type="NCBIfam" id="TIGR00581">
    <property type="entry name" value="moaC"/>
    <property type="match status" value="1"/>
</dbReference>
<dbReference type="NCBIfam" id="NF006870">
    <property type="entry name" value="PRK09364.1"/>
    <property type="match status" value="1"/>
</dbReference>
<dbReference type="NCBIfam" id="NF008999">
    <property type="entry name" value="PRK12343.1"/>
    <property type="match status" value="1"/>
</dbReference>
<dbReference type="Pfam" id="PF01967">
    <property type="entry name" value="MoaC"/>
    <property type="match status" value="1"/>
</dbReference>
<dbReference type="SUPFAM" id="SSF55040">
    <property type="entry name" value="Molybdenum cofactor biosynthesis protein C, MoaC"/>
    <property type="match status" value="1"/>
</dbReference>
<gene>
    <name evidence="1" type="primary">moaC</name>
    <name type="ordered locus">MA_1168</name>
</gene>
<keyword id="KW-0456">Lyase</keyword>
<keyword id="KW-0501">Molybdenum cofactor biosynthesis</keyword>
<keyword id="KW-1185">Reference proteome</keyword>
<proteinExistence type="inferred from homology"/>
<evidence type="ECO:0000255" key="1">
    <source>
        <dbReference type="HAMAP-Rule" id="MF_01224"/>
    </source>
</evidence>
<protein>
    <recommendedName>
        <fullName evidence="1">Probable cyclic pyranopterin monophosphate synthase</fullName>
        <ecNumber evidence="1">4.6.1.17</ecNumber>
    </recommendedName>
    <alternativeName>
        <fullName evidence="1">Molybdenum cofactor biosynthesis protein C</fullName>
    </alternativeName>
</protein>
<sequence length="158" mass="17248">MIFVEKSFTHIEADRARMVDISEKNNVLRMARAAGEIVLSAETMEKIRTGTVEKGNVFATARVAAVLAVKKTPETIPMCHQIPITGIDVDLEIGKDSVSAVVEVRTVGKTGVEMEALTGVSVALLTVWDMVKSAEKDETGNYPHTLIRNIRVLEKLKG</sequence>
<accession>Q8TRK7</accession>
<feature type="chain" id="PRO_0000097853" description="Probable cyclic pyranopterin monophosphate synthase">
    <location>
        <begin position="1"/>
        <end position="158"/>
    </location>
</feature>
<feature type="active site" evidence="1">
    <location>
        <position position="129"/>
    </location>
</feature>
<feature type="binding site" evidence="1">
    <location>
        <begin position="78"/>
        <end position="80"/>
    </location>
    <ligand>
        <name>substrate</name>
    </ligand>
</feature>
<feature type="binding site" evidence="1">
    <location>
        <begin position="114"/>
        <end position="115"/>
    </location>
    <ligand>
        <name>substrate</name>
    </ligand>
</feature>
<reference key="1">
    <citation type="journal article" date="2002" name="Genome Res.">
        <title>The genome of Methanosarcina acetivorans reveals extensive metabolic and physiological diversity.</title>
        <authorList>
            <person name="Galagan J.E."/>
            <person name="Nusbaum C."/>
            <person name="Roy A."/>
            <person name="Endrizzi M.G."/>
            <person name="Macdonald P."/>
            <person name="FitzHugh W."/>
            <person name="Calvo S."/>
            <person name="Engels R."/>
            <person name="Smirnov S."/>
            <person name="Atnoor D."/>
            <person name="Brown A."/>
            <person name="Allen N."/>
            <person name="Naylor J."/>
            <person name="Stange-Thomann N."/>
            <person name="DeArellano K."/>
            <person name="Johnson R."/>
            <person name="Linton L."/>
            <person name="McEwan P."/>
            <person name="McKernan K."/>
            <person name="Talamas J."/>
            <person name="Tirrell A."/>
            <person name="Ye W."/>
            <person name="Zimmer A."/>
            <person name="Barber R.D."/>
            <person name="Cann I."/>
            <person name="Graham D.E."/>
            <person name="Grahame D.A."/>
            <person name="Guss A.M."/>
            <person name="Hedderich R."/>
            <person name="Ingram-Smith C."/>
            <person name="Kuettner H.C."/>
            <person name="Krzycki J.A."/>
            <person name="Leigh J.A."/>
            <person name="Li W."/>
            <person name="Liu J."/>
            <person name="Mukhopadhyay B."/>
            <person name="Reeve J.N."/>
            <person name="Smith K."/>
            <person name="Springer T.A."/>
            <person name="Umayam L.A."/>
            <person name="White O."/>
            <person name="White R.H."/>
            <person name="de Macario E.C."/>
            <person name="Ferry J.G."/>
            <person name="Jarrell K.F."/>
            <person name="Jing H."/>
            <person name="Macario A.J.L."/>
            <person name="Paulsen I.T."/>
            <person name="Pritchett M."/>
            <person name="Sowers K.R."/>
            <person name="Swanson R.V."/>
            <person name="Zinder S.H."/>
            <person name="Lander E."/>
            <person name="Metcalf W.W."/>
            <person name="Birren B."/>
        </authorList>
    </citation>
    <scope>NUCLEOTIDE SEQUENCE [LARGE SCALE GENOMIC DNA]</scope>
    <source>
        <strain>ATCC 35395 / DSM 2834 / JCM 12185 / C2A</strain>
    </source>
</reference>